<sequence>MEPGLWLLFGLTVTSAAGFVPCSQSGDAGRRGVSQAPTAARSEGDCEETVAGPGEETVAGPGEGTVAPTALQGPSPGSPGQEQAAEGAPEHHRSRRCTCFTYKDKECVYYCHLDIIWINTPEQTVPYGLSNYRGSFRGKRSAGPLPGNLQLSHRPHLRCACVGRYDKACLHFCTQTLDVSSNSRTAEKTDKEEEGKVEVKDQQSKQALDLHHPKLMPGSGLALAPSTCPRCLFQEGAP</sequence>
<keyword id="KW-0002">3D-structure</keyword>
<keyword id="KW-0025">Alternative splicing</keyword>
<keyword id="KW-0165">Cleavage on pair of basic residues</keyword>
<keyword id="KW-0209">Deafness</keyword>
<keyword id="KW-0903">Direct protein sequencing</keyword>
<keyword id="KW-0225">Disease variant</keyword>
<keyword id="KW-1015">Disulfide bond</keyword>
<keyword id="KW-0367">Hirschsprung disease</keyword>
<keyword id="KW-1267">Proteomics identification</keyword>
<keyword id="KW-1185">Reference proteome</keyword>
<keyword id="KW-0964">Secreted</keyword>
<keyword id="KW-0732">Signal</keyword>
<keyword id="KW-0838">Vasoactive</keyword>
<keyword id="KW-0839">Vasoconstrictor</keyword>
<keyword id="KW-0897">Waardenburg syndrome</keyword>
<gene>
    <name type="primary">EDN3</name>
</gene>
<dbReference type="EMBL" id="J05081">
    <property type="protein sequence ID" value="AAA52405.1"/>
    <property type="molecule type" value="mRNA"/>
</dbReference>
<dbReference type="EMBL" id="X52001">
    <property type="protein sequence ID" value="CAA36252.1"/>
    <property type="molecule type" value="mRNA"/>
</dbReference>
<dbReference type="EMBL" id="BT007085">
    <property type="protein sequence ID" value="AAP35748.1"/>
    <property type="molecule type" value="mRNA"/>
</dbReference>
<dbReference type="EMBL" id="AY444503">
    <property type="protein sequence ID" value="AAR16083.1"/>
    <property type="status" value="ALT_SEQ"/>
    <property type="molecule type" value="Genomic_DNA"/>
</dbReference>
<dbReference type="EMBL" id="AL035250">
    <property type="status" value="NOT_ANNOTATED_CDS"/>
    <property type="molecule type" value="Genomic_DNA"/>
</dbReference>
<dbReference type="EMBL" id="CH471077">
    <property type="protein sequence ID" value="EAW75434.1"/>
    <property type="molecule type" value="Genomic_DNA"/>
</dbReference>
<dbReference type="EMBL" id="CH471077">
    <property type="protein sequence ID" value="EAW75435.1"/>
    <property type="molecule type" value="Genomic_DNA"/>
</dbReference>
<dbReference type="EMBL" id="CH471077">
    <property type="protein sequence ID" value="EAW75437.1"/>
    <property type="molecule type" value="Genomic_DNA"/>
</dbReference>
<dbReference type="EMBL" id="BC008876">
    <property type="protein sequence ID" value="AAH08876.1"/>
    <property type="molecule type" value="mRNA"/>
</dbReference>
<dbReference type="EMBL" id="BC053866">
    <property type="protein sequence ID" value="AAH53866.1"/>
    <property type="molecule type" value="mRNA"/>
</dbReference>
<dbReference type="CCDS" id="CCDS13477.1">
    <molecule id="P14138-1"/>
</dbReference>
<dbReference type="CCDS" id="CCDS13478.1">
    <molecule id="P14138-2"/>
</dbReference>
<dbReference type="CCDS" id="CCDS13479.1">
    <molecule id="P14138-3"/>
</dbReference>
<dbReference type="PIR" id="A34378">
    <property type="entry name" value="A34378"/>
</dbReference>
<dbReference type="RefSeq" id="NP_001289384.1">
    <property type="nucleotide sequence ID" value="NM_001302455.1"/>
</dbReference>
<dbReference type="RefSeq" id="NP_001289385.1">
    <property type="nucleotide sequence ID" value="NM_001302456.1"/>
</dbReference>
<dbReference type="RefSeq" id="NP_996915.1">
    <molecule id="P14138-3"/>
    <property type="nucleotide sequence ID" value="NM_207032.3"/>
</dbReference>
<dbReference type="RefSeq" id="NP_996916.1">
    <molecule id="P14138-2"/>
    <property type="nucleotide sequence ID" value="NM_207033.3"/>
</dbReference>
<dbReference type="RefSeq" id="NP_996917.1">
    <molecule id="P14138-1"/>
    <property type="nucleotide sequence ID" value="NM_207034.3"/>
</dbReference>
<dbReference type="PDB" id="6IGK">
    <property type="method" value="X-ray"/>
    <property type="resolution" value="2.00 A"/>
    <property type="chains" value="B=97-117"/>
</dbReference>
<dbReference type="PDBsum" id="6IGK"/>
<dbReference type="BMRB" id="P14138"/>
<dbReference type="SMR" id="P14138"/>
<dbReference type="BioGRID" id="108230">
    <property type="interactions" value="132"/>
</dbReference>
<dbReference type="FunCoup" id="P14138">
    <property type="interactions" value="800"/>
</dbReference>
<dbReference type="IntAct" id="P14138">
    <property type="interactions" value="101"/>
</dbReference>
<dbReference type="STRING" id="9606.ENSP00000337128"/>
<dbReference type="iPTMnet" id="P14138"/>
<dbReference type="PhosphoSitePlus" id="P14138"/>
<dbReference type="BioMuta" id="EDN3"/>
<dbReference type="DMDM" id="119618"/>
<dbReference type="MassIVE" id="P14138"/>
<dbReference type="PaxDb" id="9606-ENSP00000337128"/>
<dbReference type="PeptideAtlas" id="P14138"/>
<dbReference type="ProteomicsDB" id="53025">
    <molecule id="P14138-1"/>
</dbReference>
<dbReference type="ProteomicsDB" id="53026">
    <molecule id="P14138-2"/>
</dbReference>
<dbReference type="ProteomicsDB" id="53027">
    <molecule id="P14138-3"/>
</dbReference>
<dbReference type="Antibodypedia" id="29284">
    <property type="antibodies" value="300 antibodies from 30 providers"/>
</dbReference>
<dbReference type="DNASU" id="1908"/>
<dbReference type="Ensembl" id="ENST00000311585.11">
    <molecule id="P14138-3"/>
    <property type="protein sequence ID" value="ENSP00000311854.7"/>
    <property type="gene ID" value="ENSG00000124205.18"/>
</dbReference>
<dbReference type="Ensembl" id="ENST00000337938.7">
    <molecule id="P14138-1"/>
    <property type="protein sequence ID" value="ENSP00000337128.2"/>
    <property type="gene ID" value="ENSG00000124205.18"/>
</dbReference>
<dbReference type="Ensembl" id="ENST00000371028.6">
    <molecule id="P14138-1"/>
    <property type="protein sequence ID" value="ENSP00000360067.2"/>
    <property type="gene ID" value="ENSG00000124205.18"/>
</dbReference>
<dbReference type="Ensembl" id="ENST00000395654.3">
    <molecule id="P14138-2"/>
    <property type="protein sequence ID" value="ENSP00000379015.3"/>
    <property type="gene ID" value="ENSG00000124205.18"/>
</dbReference>
<dbReference type="GeneID" id="1908"/>
<dbReference type="KEGG" id="hsa:1908"/>
<dbReference type="MANE-Select" id="ENST00000337938.7">
    <property type="protein sequence ID" value="ENSP00000337128.2"/>
    <property type="RefSeq nucleotide sequence ID" value="NM_207034.3"/>
    <property type="RefSeq protein sequence ID" value="NP_996917.1"/>
</dbReference>
<dbReference type="UCSC" id="uc002yap.4">
    <molecule id="P14138-1"/>
    <property type="organism name" value="human"/>
</dbReference>
<dbReference type="AGR" id="HGNC:3178"/>
<dbReference type="CTD" id="1908"/>
<dbReference type="DisGeNET" id="1908"/>
<dbReference type="GeneCards" id="EDN3"/>
<dbReference type="HGNC" id="HGNC:3178">
    <property type="gene designation" value="EDN3"/>
</dbReference>
<dbReference type="HPA" id="ENSG00000124205">
    <property type="expression patterns" value="Tissue enhanced (cervix, salivary gland, vagina)"/>
</dbReference>
<dbReference type="MalaCards" id="EDN3"/>
<dbReference type="MIM" id="131242">
    <property type="type" value="gene"/>
</dbReference>
<dbReference type="MIM" id="613265">
    <property type="type" value="phenotype"/>
</dbReference>
<dbReference type="MIM" id="613712">
    <property type="type" value="phenotype"/>
</dbReference>
<dbReference type="neXtProt" id="NX_P14138"/>
<dbReference type="OpenTargets" id="ENSG00000124205"/>
<dbReference type="Orphanet" id="661">
    <property type="disease" value="Congenital central hypoventilation syndrome"/>
</dbReference>
<dbReference type="Orphanet" id="388">
    <property type="disease" value="Hirschsprung disease"/>
</dbReference>
<dbReference type="Orphanet" id="897">
    <property type="disease" value="Waardenburg-Shah syndrome"/>
</dbReference>
<dbReference type="PharmGKB" id="PA27616"/>
<dbReference type="VEuPathDB" id="HostDB:ENSG00000124205"/>
<dbReference type="eggNOG" id="ENOG502S4W0">
    <property type="taxonomic scope" value="Eukaryota"/>
</dbReference>
<dbReference type="GeneTree" id="ENSGT00950000183053"/>
<dbReference type="InParanoid" id="P14138"/>
<dbReference type="OMA" id="TEEKDQC"/>
<dbReference type="OrthoDB" id="9943124at2759"/>
<dbReference type="PAN-GO" id="P14138">
    <property type="GO annotations" value="7 GO annotations based on evolutionary models"/>
</dbReference>
<dbReference type="PhylomeDB" id="P14138"/>
<dbReference type="TreeFam" id="TF333184"/>
<dbReference type="PathwayCommons" id="P14138"/>
<dbReference type="Reactome" id="R-HSA-375276">
    <property type="pathway name" value="Peptide ligand-binding receptors"/>
</dbReference>
<dbReference type="Reactome" id="R-HSA-416476">
    <property type="pathway name" value="G alpha (q) signalling events"/>
</dbReference>
<dbReference type="Reactome" id="R-HSA-9856649">
    <property type="pathway name" value="Transcriptional and post-translational regulation of MITF-M expression and activity"/>
</dbReference>
<dbReference type="SignaLink" id="P14138"/>
<dbReference type="SIGNOR" id="P14138"/>
<dbReference type="BioGRID-ORCS" id="1908">
    <property type="hits" value="10 hits in 1140 CRISPR screens"/>
</dbReference>
<dbReference type="GeneWiki" id="Endothelin_3"/>
<dbReference type="GenomeRNAi" id="1908"/>
<dbReference type="Pharos" id="P14138">
    <property type="development level" value="Tbio"/>
</dbReference>
<dbReference type="PRO" id="PR:P14138"/>
<dbReference type="Proteomes" id="UP000005640">
    <property type="component" value="Chromosome 20"/>
</dbReference>
<dbReference type="RNAct" id="P14138">
    <property type="molecule type" value="protein"/>
</dbReference>
<dbReference type="Bgee" id="ENSG00000124205">
    <property type="expression patterns" value="Expressed in penis and 116 other cell types or tissues"/>
</dbReference>
<dbReference type="ExpressionAtlas" id="P14138">
    <property type="expression patterns" value="baseline and differential"/>
</dbReference>
<dbReference type="GO" id="GO:0005576">
    <property type="term" value="C:extracellular region"/>
    <property type="evidence" value="ECO:0000304"/>
    <property type="project" value="Reactome"/>
</dbReference>
<dbReference type="GO" id="GO:0005615">
    <property type="term" value="C:extracellular space"/>
    <property type="evidence" value="ECO:0000314"/>
    <property type="project" value="BHF-UCL"/>
</dbReference>
<dbReference type="GO" id="GO:0031708">
    <property type="term" value="F:endothelin B receptor binding"/>
    <property type="evidence" value="ECO:0000353"/>
    <property type="project" value="BHF-UCL"/>
</dbReference>
<dbReference type="GO" id="GO:0005179">
    <property type="term" value="F:hormone activity"/>
    <property type="evidence" value="ECO:0000314"/>
    <property type="project" value="BHF-UCL"/>
</dbReference>
<dbReference type="GO" id="GO:0005102">
    <property type="term" value="F:signaling receptor binding"/>
    <property type="evidence" value="ECO:0000304"/>
    <property type="project" value="ProtInc"/>
</dbReference>
<dbReference type="GO" id="GO:0048675">
    <property type="term" value="P:axon extension"/>
    <property type="evidence" value="ECO:0007669"/>
    <property type="project" value="Ensembl"/>
</dbReference>
<dbReference type="GO" id="GO:0007411">
    <property type="term" value="P:axon guidance"/>
    <property type="evidence" value="ECO:0007669"/>
    <property type="project" value="Ensembl"/>
</dbReference>
<dbReference type="GO" id="GO:0008015">
    <property type="term" value="P:blood circulation"/>
    <property type="evidence" value="ECO:0000304"/>
    <property type="project" value="ProtInc"/>
</dbReference>
<dbReference type="GO" id="GO:0008283">
    <property type="term" value="P:cell population proliferation"/>
    <property type="evidence" value="ECO:0007669"/>
    <property type="project" value="Ensembl"/>
</dbReference>
<dbReference type="GO" id="GO:0007166">
    <property type="term" value="P:cell surface receptor signaling pathway"/>
    <property type="evidence" value="ECO:0000314"/>
    <property type="project" value="BHF-UCL"/>
</dbReference>
<dbReference type="GO" id="GO:0007267">
    <property type="term" value="P:cell-cell signaling"/>
    <property type="evidence" value="ECO:0000304"/>
    <property type="project" value="ProtInc"/>
</dbReference>
<dbReference type="GO" id="GO:0051649">
    <property type="term" value="P:establishment of localization in cell"/>
    <property type="evidence" value="ECO:0007669"/>
    <property type="project" value="Ensembl"/>
</dbReference>
<dbReference type="GO" id="GO:0006874">
    <property type="term" value="P:intracellular calcium ion homeostasis"/>
    <property type="evidence" value="ECO:0000318"/>
    <property type="project" value="GO_Central"/>
</dbReference>
<dbReference type="GO" id="GO:0010961">
    <property type="term" value="P:intracellular magnesium ion homeostasis"/>
    <property type="evidence" value="ECO:0007669"/>
    <property type="project" value="Ensembl"/>
</dbReference>
<dbReference type="GO" id="GO:0030318">
    <property type="term" value="P:melanocyte differentiation"/>
    <property type="evidence" value="ECO:0007669"/>
    <property type="project" value="Ensembl"/>
</dbReference>
<dbReference type="GO" id="GO:0001755">
    <property type="term" value="P:neural crest cell migration"/>
    <property type="evidence" value="ECO:0007669"/>
    <property type="project" value="Ensembl"/>
</dbReference>
<dbReference type="GO" id="GO:0030593">
    <property type="term" value="P:neutrophil chemotaxis"/>
    <property type="evidence" value="ECO:0000314"/>
    <property type="project" value="BHF-UCL"/>
</dbReference>
<dbReference type="GO" id="GO:0030072">
    <property type="term" value="P:peptide hormone secretion"/>
    <property type="evidence" value="ECO:0000314"/>
    <property type="project" value="BHF-UCL"/>
</dbReference>
<dbReference type="GO" id="GO:0045597">
    <property type="term" value="P:positive regulation of cell differentiation"/>
    <property type="evidence" value="ECO:0000316"/>
    <property type="project" value="MGI"/>
</dbReference>
<dbReference type="GO" id="GO:0008284">
    <property type="term" value="P:positive regulation of cell population proliferation"/>
    <property type="evidence" value="ECO:0000314"/>
    <property type="project" value="MGI"/>
</dbReference>
<dbReference type="GO" id="GO:0010460">
    <property type="term" value="P:positive regulation of heart rate"/>
    <property type="evidence" value="ECO:0000314"/>
    <property type="project" value="BHF-UCL"/>
</dbReference>
<dbReference type="GO" id="GO:0046887">
    <property type="term" value="P:positive regulation of hormone secretion"/>
    <property type="evidence" value="ECO:0000314"/>
    <property type="project" value="BHF-UCL"/>
</dbReference>
<dbReference type="GO" id="GO:0002690">
    <property type="term" value="P:positive regulation of leukocyte chemotaxis"/>
    <property type="evidence" value="ECO:0000314"/>
    <property type="project" value="BHF-UCL"/>
</dbReference>
<dbReference type="GO" id="GO:0043410">
    <property type="term" value="P:positive regulation of MAPK cascade"/>
    <property type="evidence" value="ECO:0000314"/>
    <property type="project" value="BHF-UCL"/>
</dbReference>
<dbReference type="GO" id="GO:0045840">
    <property type="term" value="P:positive regulation of mitotic nuclear division"/>
    <property type="evidence" value="ECO:0000314"/>
    <property type="project" value="BHF-UCL"/>
</dbReference>
<dbReference type="GO" id="GO:1901381">
    <property type="term" value="P:positive regulation of potassium ion transmembrane transport"/>
    <property type="evidence" value="ECO:0007669"/>
    <property type="project" value="Ensembl"/>
</dbReference>
<dbReference type="GO" id="GO:0045987">
    <property type="term" value="P:positive regulation of smooth muscle contraction"/>
    <property type="evidence" value="ECO:0000318"/>
    <property type="project" value="GO_Central"/>
</dbReference>
<dbReference type="GO" id="GO:0071805">
    <property type="term" value="P:potassium ion transmembrane transport"/>
    <property type="evidence" value="ECO:0007669"/>
    <property type="project" value="Ensembl"/>
</dbReference>
<dbReference type="GO" id="GO:0048070">
    <property type="term" value="P:regulation of developmental pigmentation"/>
    <property type="evidence" value="ECO:0007669"/>
    <property type="project" value="Ensembl"/>
</dbReference>
<dbReference type="GO" id="GO:0010468">
    <property type="term" value="P:regulation of gene expression"/>
    <property type="evidence" value="ECO:0000316"/>
    <property type="project" value="MGI"/>
</dbReference>
<dbReference type="GO" id="GO:0003100">
    <property type="term" value="P:regulation of systemic arterial blood pressure by endothelin"/>
    <property type="evidence" value="ECO:0000314"/>
    <property type="project" value="BHF-UCL"/>
</dbReference>
<dbReference type="GO" id="GO:0019229">
    <property type="term" value="P:regulation of vasoconstriction"/>
    <property type="evidence" value="ECO:0007669"/>
    <property type="project" value="InterPro"/>
</dbReference>
<dbReference type="GO" id="GO:0007165">
    <property type="term" value="P:signal transduction"/>
    <property type="evidence" value="ECO:0000304"/>
    <property type="project" value="ProtInc"/>
</dbReference>
<dbReference type="GO" id="GO:0042310">
    <property type="term" value="P:vasoconstriction"/>
    <property type="evidence" value="ECO:0000314"/>
    <property type="project" value="BHF-UCL"/>
</dbReference>
<dbReference type="GO" id="GO:0014826">
    <property type="term" value="P:vein smooth muscle contraction"/>
    <property type="evidence" value="ECO:0000314"/>
    <property type="project" value="BHF-UCL"/>
</dbReference>
<dbReference type="InterPro" id="IPR020475">
    <property type="entry name" value="Endothelin"/>
</dbReference>
<dbReference type="InterPro" id="IPR019764">
    <property type="entry name" value="Endothelin_toxin_CS"/>
</dbReference>
<dbReference type="InterPro" id="IPR001928">
    <property type="entry name" value="Endothln-like_toxin"/>
</dbReference>
<dbReference type="PANTHER" id="PTHR13874">
    <property type="entry name" value="ENDOTHELIN"/>
    <property type="match status" value="1"/>
</dbReference>
<dbReference type="PANTHER" id="PTHR13874:SF11">
    <property type="entry name" value="ENDOTHELIN-3"/>
    <property type="match status" value="1"/>
</dbReference>
<dbReference type="Pfam" id="PF00322">
    <property type="entry name" value="Endothelin"/>
    <property type="match status" value="1"/>
</dbReference>
<dbReference type="PRINTS" id="PR00365">
    <property type="entry name" value="ENDOTHELIN"/>
</dbReference>
<dbReference type="SMART" id="SM00272">
    <property type="entry name" value="END"/>
    <property type="match status" value="2"/>
</dbReference>
<dbReference type="PROSITE" id="PS00270">
    <property type="entry name" value="ENDOTHELIN"/>
    <property type="match status" value="2"/>
</dbReference>
<accession>P14138</accession>
<accession>E1P5I5</accession>
<accession>Q03229</accession>
<accession>Q7Z6D2</accession>
<accession>Q9UGT7</accession>
<name>EDN3_HUMAN</name>
<protein>
    <recommendedName>
        <fullName>Endothelin-3</fullName>
        <shortName>ET-3</shortName>
    </recommendedName>
    <alternativeName>
        <fullName>Preproendothelin-3</fullName>
        <shortName>PPET3</shortName>
    </alternativeName>
</protein>
<reference key="1">
    <citation type="journal article" date="1989" name="J. Biol. Chem.">
        <title>cDNA cloning and chromosomal assignment of the gene encoding endothelin 3.</title>
        <authorList>
            <person name="Bloch K.D."/>
            <person name="Eddy R.L."/>
            <person name="Shows T.B."/>
            <person name="Quertermous T."/>
        </authorList>
    </citation>
    <scope>NUCLEOTIDE SEQUENCE [MRNA]</scope>
</reference>
<reference key="2">
    <citation type="journal article" date="1990" name="FEBS Lett.">
        <title>One of the endothelin gene family, endothelin 3 gene, is expressed in the placenta.</title>
        <authorList>
            <person name="Onda H."/>
            <person name="Ohkubo S."/>
            <person name="Ogi K."/>
            <person name="Kosaka T."/>
            <person name="Kimura C."/>
            <person name="Matsumoto H."/>
            <person name="Suzuki N."/>
            <person name="Fujino M."/>
        </authorList>
    </citation>
    <scope>NUCLEOTIDE SEQUENCE [MRNA] (ISOFORM SHORT)</scope>
    <source>
        <tissue>Placenta</tissue>
    </source>
</reference>
<reference key="3">
    <citation type="submission" date="2003-05" db="EMBL/GenBank/DDBJ databases">
        <title>Cloning of human full-length CDSs in BD Creator(TM) system donor vector.</title>
        <authorList>
            <person name="Kalnine N."/>
            <person name="Chen X."/>
            <person name="Rolfs A."/>
            <person name="Halleck A."/>
            <person name="Hines L."/>
            <person name="Eisenstein S."/>
            <person name="Koundinya M."/>
            <person name="Raphael J."/>
            <person name="Moreira D."/>
            <person name="Kelley T."/>
            <person name="LaBaer J."/>
            <person name="Lin Y."/>
            <person name="Phelan M."/>
            <person name="Farmer A."/>
        </authorList>
    </citation>
    <scope>NUCLEOTIDE SEQUENCE [LARGE SCALE MRNA] (ISOFORM LONG)</scope>
</reference>
<reference key="4">
    <citation type="submission" date="2003-10" db="EMBL/GenBank/DDBJ databases">
        <authorList>
            <consortium name="NIEHS SNPs program"/>
        </authorList>
    </citation>
    <scope>NUCLEOTIDE SEQUENCE [GENOMIC DNA]</scope>
    <scope>VARIANT THR-17</scope>
</reference>
<reference key="5">
    <citation type="journal article" date="2001" name="Nature">
        <title>The DNA sequence and comparative analysis of human chromosome 20.</title>
        <authorList>
            <person name="Deloukas P."/>
            <person name="Matthews L.H."/>
            <person name="Ashurst J.L."/>
            <person name="Burton J."/>
            <person name="Gilbert J.G.R."/>
            <person name="Jones M."/>
            <person name="Stavrides G."/>
            <person name="Almeida J.P."/>
            <person name="Babbage A.K."/>
            <person name="Bagguley C.L."/>
            <person name="Bailey J."/>
            <person name="Barlow K.F."/>
            <person name="Bates K.N."/>
            <person name="Beard L.M."/>
            <person name="Beare D.M."/>
            <person name="Beasley O.P."/>
            <person name="Bird C.P."/>
            <person name="Blakey S.E."/>
            <person name="Bridgeman A.M."/>
            <person name="Brown A.J."/>
            <person name="Buck D."/>
            <person name="Burrill W.D."/>
            <person name="Butler A.P."/>
            <person name="Carder C."/>
            <person name="Carter N.P."/>
            <person name="Chapman J.C."/>
            <person name="Clamp M."/>
            <person name="Clark G."/>
            <person name="Clark L.N."/>
            <person name="Clark S.Y."/>
            <person name="Clee C.M."/>
            <person name="Clegg S."/>
            <person name="Cobley V.E."/>
            <person name="Collier R.E."/>
            <person name="Connor R.E."/>
            <person name="Corby N.R."/>
            <person name="Coulson A."/>
            <person name="Coville G.J."/>
            <person name="Deadman R."/>
            <person name="Dhami P.D."/>
            <person name="Dunn M."/>
            <person name="Ellington A.G."/>
            <person name="Frankland J.A."/>
            <person name="Fraser A."/>
            <person name="French L."/>
            <person name="Garner P."/>
            <person name="Grafham D.V."/>
            <person name="Griffiths C."/>
            <person name="Griffiths M.N.D."/>
            <person name="Gwilliam R."/>
            <person name="Hall R.E."/>
            <person name="Hammond S."/>
            <person name="Harley J.L."/>
            <person name="Heath P.D."/>
            <person name="Ho S."/>
            <person name="Holden J.L."/>
            <person name="Howden P.J."/>
            <person name="Huckle E."/>
            <person name="Hunt A.R."/>
            <person name="Hunt S.E."/>
            <person name="Jekosch K."/>
            <person name="Johnson C.M."/>
            <person name="Johnson D."/>
            <person name="Kay M.P."/>
            <person name="Kimberley A.M."/>
            <person name="King A."/>
            <person name="Knights A."/>
            <person name="Laird G.K."/>
            <person name="Lawlor S."/>
            <person name="Lehvaeslaiho M.H."/>
            <person name="Leversha M.A."/>
            <person name="Lloyd C."/>
            <person name="Lloyd D.M."/>
            <person name="Lovell J.D."/>
            <person name="Marsh V.L."/>
            <person name="Martin S.L."/>
            <person name="McConnachie L.J."/>
            <person name="McLay K."/>
            <person name="McMurray A.A."/>
            <person name="Milne S.A."/>
            <person name="Mistry D."/>
            <person name="Moore M.J.F."/>
            <person name="Mullikin J.C."/>
            <person name="Nickerson T."/>
            <person name="Oliver K."/>
            <person name="Parker A."/>
            <person name="Patel R."/>
            <person name="Pearce T.A.V."/>
            <person name="Peck A.I."/>
            <person name="Phillimore B.J.C.T."/>
            <person name="Prathalingam S.R."/>
            <person name="Plumb R.W."/>
            <person name="Ramsay H."/>
            <person name="Rice C.M."/>
            <person name="Ross M.T."/>
            <person name="Scott C.E."/>
            <person name="Sehra H.K."/>
            <person name="Shownkeen R."/>
            <person name="Sims S."/>
            <person name="Skuce C.D."/>
            <person name="Smith M.L."/>
            <person name="Soderlund C."/>
            <person name="Steward C.A."/>
            <person name="Sulston J.E."/>
            <person name="Swann R.M."/>
            <person name="Sycamore N."/>
            <person name="Taylor R."/>
            <person name="Tee L."/>
            <person name="Thomas D.W."/>
            <person name="Thorpe A."/>
            <person name="Tracey A."/>
            <person name="Tromans A.C."/>
            <person name="Vaudin M."/>
            <person name="Wall M."/>
            <person name="Wallis J.M."/>
            <person name="Whitehead S.L."/>
            <person name="Whittaker P."/>
            <person name="Willey D.L."/>
            <person name="Williams L."/>
            <person name="Williams S.A."/>
            <person name="Wilming L."/>
            <person name="Wray P.W."/>
            <person name="Hubbard T."/>
            <person name="Durbin R.M."/>
            <person name="Bentley D.R."/>
            <person name="Beck S."/>
            <person name="Rogers J."/>
        </authorList>
    </citation>
    <scope>NUCLEOTIDE SEQUENCE [LARGE SCALE GENOMIC DNA]</scope>
</reference>
<reference key="6">
    <citation type="submission" date="2005-09" db="EMBL/GenBank/DDBJ databases">
        <authorList>
            <person name="Mural R.J."/>
            <person name="Istrail S."/>
            <person name="Sutton G.G."/>
            <person name="Florea L."/>
            <person name="Halpern A.L."/>
            <person name="Mobarry C.M."/>
            <person name="Lippert R."/>
            <person name="Walenz B."/>
            <person name="Shatkay H."/>
            <person name="Dew I."/>
            <person name="Miller J.R."/>
            <person name="Flanigan M.J."/>
            <person name="Edwards N.J."/>
            <person name="Bolanos R."/>
            <person name="Fasulo D."/>
            <person name="Halldorsson B.V."/>
            <person name="Hannenhalli S."/>
            <person name="Turner R."/>
            <person name="Yooseph S."/>
            <person name="Lu F."/>
            <person name="Nusskern D.R."/>
            <person name="Shue B.C."/>
            <person name="Zheng X.H."/>
            <person name="Zhong F."/>
            <person name="Delcher A.L."/>
            <person name="Huson D.H."/>
            <person name="Kravitz S.A."/>
            <person name="Mouchard L."/>
            <person name="Reinert K."/>
            <person name="Remington K.A."/>
            <person name="Clark A.G."/>
            <person name="Waterman M.S."/>
            <person name="Eichler E.E."/>
            <person name="Adams M.D."/>
            <person name="Hunkapiller M.W."/>
            <person name="Myers E.W."/>
            <person name="Venter J.C."/>
        </authorList>
    </citation>
    <scope>NUCLEOTIDE SEQUENCE [LARGE SCALE GENOMIC DNA]</scope>
</reference>
<reference key="7">
    <citation type="journal article" date="2004" name="Genome Res.">
        <title>The status, quality, and expansion of the NIH full-length cDNA project: the Mammalian Gene Collection (MGC).</title>
        <authorList>
            <consortium name="The MGC Project Team"/>
        </authorList>
    </citation>
    <scope>NUCLEOTIDE SEQUENCE [LARGE SCALE MRNA] (ISOFORMS LONG AND 3)</scope>
    <source>
        <tissue>Lung</tissue>
        <tissue>Muscle</tissue>
    </source>
</reference>
<reference key="8">
    <citation type="journal article" date="1999" name="Blood">
        <title>Proteolytic processing of big endothelin-3 by the kell blood group protein.</title>
        <authorList>
            <person name="Lee S."/>
            <person name="Lin M."/>
            <person name="Mele A."/>
            <person name="Cao Y."/>
            <person name="Farmar J."/>
            <person name="Russo D."/>
            <person name="Redman C."/>
        </authorList>
    </citation>
    <scope>PARTIAL PROTEIN SEQUENCE</scope>
    <scope>CLEAVAGE BY KELL</scope>
    <scope>IDENTIFICATION BY MASS SPECTROMETRY</scope>
</reference>
<reference key="9">
    <citation type="journal article" date="1997" name="J. Clin. Endocrinol. Metab.">
        <title>Endothelin-1 and ETA receptor expression in vascular smooth muscle cells from human placenta: a new ETA receptor messenger ribonucleic acid is generated by alternative splicing of exon 3.</title>
        <authorList>
            <person name="Bourgeois C."/>
            <person name="Robert B."/>
            <person name="Rebourcet R."/>
            <person name="Mondon F."/>
            <person name="Mignot T.-M."/>
            <person name="Duc-Goiran P."/>
            <person name="Ferre F."/>
        </authorList>
    </citation>
    <scope>TISSUE SPECIFICITY</scope>
</reference>
<reference key="10">
    <citation type="journal article" date="1992" name="Biochemistry">
        <title>Solution structure of endothelin-3 determined using NMR spectroscopy.</title>
        <authorList>
            <person name="Mills R.G."/>
            <person name="O'Donoghue S.I."/>
            <person name="Smith R."/>
            <person name="King G.F."/>
        </authorList>
    </citation>
    <scope>STRUCTURE BY NMR OF ET-3</scope>
</reference>
<reference key="11">
    <citation type="journal article" date="1997" name="Eur. J. Hum. Genet.">
        <title>Mutations in Hirschsprung disease: when does a mutation contribute to the phenotype.</title>
        <authorList>
            <person name="Hofstra R.M.W."/>
            <person name="Osinga J."/>
            <person name="Buys C.H.C.M."/>
        </authorList>
    </citation>
    <scope>REVIEW ON VARIANTS</scope>
</reference>
<reference key="12">
    <citation type="journal article" date="1996" name="Nat. Genet.">
        <title>A homozygous mutation in the endothelin-3 gene associated with a combined Waardenburg type 2 and Hirschsprung phenotype (Shah-Waardenburg syndrome).</title>
        <authorList>
            <person name="Hofstra R.M.W."/>
            <person name="Tan-Sindhunata G."/>
            <person name="Wu Y."/>
            <person name="Kamsteeg E.-J."/>
            <person name="Stulp R.P."/>
            <person name="van Ravenswaaij-Arts C."/>
            <person name="Majoor-Krakauer D."/>
            <person name="Angrist M."/>
            <person name="Chakravarti A."/>
            <person name="Meijers C."/>
            <person name="Buys C.H.C.M."/>
        </authorList>
    </citation>
    <scope>VARIANT WS4B PHE-159</scope>
</reference>
<reference key="13">
    <citation type="journal article" date="1997" name="Eur. J. Hum. Genet.">
        <title>Endothelin-3 gene mutations in isolated and syndromic Hirschsprung disease.</title>
        <authorList>
            <person name="Bidaud C."/>
            <person name="Salomon R."/>
            <person name="Van Camp G."/>
            <person name="Pelet A."/>
            <person name="Attie T."/>
            <person name="Eng C."/>
            <person name="Bonduelle M."/>
            <person name="Amiel J."/>
            <person name="Nihoul-Fekete C."/>
            <person name="Willems P.J."/>
            <person name="Munnich A."/>
            <person name="Lyonnet S."/>
        </authorList>
    </citation>
    <scope>VARIANT HSCR4 THR-224</scope>
    <scope>VARIANT THR-17</scope>
</reference>
<reference key="14">
    <citation type="journal article" date="2001" name="J. Med. Genet.">
        <title>A heterozygous endothelin 3 mutation in Waardenburg-Hirschsprung disease: is there a dosage effect of EDN3/EDNRB gene mutations on neurocristopathy phenotypes?</title>
        <authorList>
            <person name="Pingault V."/>
            <person name="Bondurand N."/>
            <person name="Lemort N."/>
            <person name="Sancandi M."/>
            <person name="Ceccherini I."/>
            <person name="Hugot J.P."/>
            <person name="Jouk P.S."/>
            <person name="Goossens M."/>
        </authorList>
    </citation>
    <scope>INVOLVEMENT IN WS4B</scope>
</reference>
<reference key="15">
    <citation type="journal article" date="2002" name="Hum. Genet.">
        <title>SOX10 mutations in chronic intestinal pseudo-obstruction suggest a complex physiopathological mechanism.</title>
        <authorList>
            <person name="Pingault V."/>
            <person name="Girard M."/>
            <person name="Bondurand N."/>
            <person name="Dorkins H."/>
            <person name="Van Maldergem L."/>
            <person name="Mowat D."/>
            <person name="Shimotake T."/>
            <person name="Verma I."/>
            <person name="Baumann C."/>
            <person name="Goossens M."/>
        </authorList>
    </citation>
    <scope>VARIANT WS4B CYS-127</scope>
</reference>
<reference key="16">
    <citation type="journal article" date="2016" name="Nature">
        <title>Analysis of protein-coding genetic variation in 60,706 humans.</title>
        <authorList>
            <consortium name="Exome Aggregation Consortium"/>
            <person name="Lek M."/>
            <person name="Karczewski K.J."/>
            <person name="Minikel E.V."/>
            <person name="Samocha K.E."/>
            <person name="Banks E."/>
            <person name="Fennell T."/>
            <person name="O'Donnell-Luria A.H."/>
            <person name="Ware J.S."/>
            <person name="Hill A.J."/>
            <person name="Cummings B.B."/>
            <person name="Tukiainen T."/>
            <person name="Birnbaum D.P."/>
            <person name="Kosmicki J.A."/>
            <person name="Duncan L.E."/>
            <person name="Estrada K."/>
            <person name="Zhao F."/>
            <person name="Zou J."/>
            <person name="Pierce-Hoffman E."/>
            <person name="Berghout J."/>
            <person name="Cooper D.N."/>
            <person name="Deflaux N."/>
            <person name="DePristo M."/>
            <person name="Do R."/>
            <person name="Flannick J."/>
            <person name="Fromer M."/>
            <person name="Gauthier L."/>
            <person name="Goldstein J."/>
            <person name="Gupta N."/>
            <person name="Howrigan D."/>
            <person name="Kiezun A."/>
            <person name="Kurki M.I."/>
            <person name="Moonshine A.L."/>
            <person name="Natarajan P."/>
            <person name="Orozco L."/>
            <person name="Peloso G.M."/>
            <person name="Poplin R."/>
            <person name="Rivas M.A."/>
            <person name="Ruano-Rubio V."/>
            <person name="Rose S.A."/>
            <person name="Ruderfer D.M."/>
            <person name="Shakir K."/>
            <person name="Stenson P.D."/>
            <person name="Stevens C."/>
            <person name="Thomas B.P."/>
            <person name="Tiao G."/>
            <person name="Tusie-Luna M.T."/>
            <person name="Weisburd B."/>
            <person name="Won H.H."/>
            <person name="Yu D."/>
            <person name="Altshuler D.M."/>
            <person name="Ardissino D."/>
            <person name="Boehnke M."/>
            <person name="Danesh J."/>
            <person name="Donnelly S."/>
            <person name="Elosua R."/>
            <person name="Florez J.C."/>
            <person name="Gabriel S.B."/>
            <person name="Getz G."/>
            <person name="Glatt S.J."/>
            <person name="Hultman C.M."/>
            <person name="Kathiresan S."/>
            <person name="Laakso M."/>
            <person name="McCarroll S."/>
            <person name="McCarthy M.I."/>
            <person name="McGovern D."/>
            <person name="McPherson R."/>
            <person name="Neale B.M."/>
            <person name="Palotie A."/>
            <person name="Purcell S.M."/>
            <person name="Saleheen D."/>
            <person name="Scharf J.M."/>
            <person name="Sklar P."/>
            <person name="Sullivan P.F."/>
            <person name="Tuomilehto J."/>
            <person name="Tsuang M.T."/>
            <person name="Watkins H.C."/>
            <person name="Wilson J.G."/>
            <person name="Daly M.J."/>
            <person name="MacArthur D.G."/>
        </authorList>
    </citation>
    <scope>VARIANT THR-17</scope>
</reference>
<proteinExistence type="evidence at protein level"/>
<comment type="function">
    <text>Endothelins are endothelium-derived vasoconstrictor peptides.</text>
</comment>
<comment type="subcellular location">
    <subcellularLocation>
        <location>Secreted</location>
    </subcellularLocation>
</comment>
<comment type="alternative products">
    <event type="alternative splicing"/>
    <isoform>
        <id>P14138-1</id>
        <name>Long</name>
        <sequence type="displayed"/>
    </isoform>
    <isoform>
        <id>P14138-2</id>
        <name>Short</name>
        <sequence type="described" ref="VSP_001445"/>
    </isoform>
    <isoform>
        <id>P14138-3</id>
        <name>3</name>
        <sequence type="described" ref="VSP_043139"/>
    </isoform>
</comment>
<comment type="tissue specificity">
    <text evidence="7">Expressed in trophoblasts and placental stem villi vessels, but not in cultured placental smooth muscle cells.</text>
</comment>
<comment type="disease" evidence="8">
    <disease id="DI-02982">
        <name>Hirschsprung disease 4</name>
        <acronym>HSCR4</acronym>
        <description>A disorder of neural crest development characterized by absence of enteric ganglia along a variable length of the intestine. It is the most common cause of congenital intestinal obstruction. Early symptoms range from complete acute neonatal obstruction, characterized by vomiting, abdominal distention and failure to pass stool, to chronic constipation in the older child.</description>
        <dbReference type="MIM" id="613712"/>
    </disease>
    <text>The disease is caused by variants affecting the gene represented in this entry.</text>
</comment>
<comment type="disease" evidence="3 4 6">
    <disease id="DI-02677">
        <name>Waardenburg syndrome 4B</name>
        <acronym>WS4B</acronym>
        <description>A disorder characterized by the association of Waardenburg features (depigmentation and deafness) with the absence of enteric ganglia in the distal part of the intestine (Hirschsprung disease).</description>
        <dbReference type="MIM" id="613265"/>
    </disease>
    <text>The disease is caused by variants affecting the gene represented in this entry.</text>
</comment>
<comment type="similarity">
    <text evidence="12">Belongs to the endothelin/sarafotoxin family.</text>
</comment>
<comment type="sequence caution" evidence="12">
    <conflict type="erroneous gene model prediction">
        <sequence resource="EMBL-CDS" id="AAR16083"/>
    </conflict>
</comment>
<evidence type="ECO:0000255" key="1"/>
<evidence type="ECO:0000256" key="2">
    <source>
        <dbReference type="SAM" id="MobiDB-lite"/>
    </source>
</evidence>
<evidence type="ECO:0000269" key="3">
    <source>
    </source>
</evidence>
<evidence type="ECO:0000269" key="4">
    <source>
    </source>
</evidence>
<evidence type="ECO:0000269" key="5">
    <source>
    </source>
</evidence>
<evidence type="ECO:0000269" key="6">
    <source>
    </source>
</evidence>
<evidence type="ECO:0000269" key="7">
    <source>
    </source>
</evidence>
<evidence type="ECO:0000269" key="8">
    <source>
    </source>
</evidence>
<evidence type="ECO:0000269" key="9">
    <source ref="4"/>
</evidence>
<evidence type="ECO:0000303" key="10">
    <source>
    </source>
</evidence>
<evidence type="ECO:0000303" key="11">
    <source>
    </source>
</evidence>
<evidence type="ECO:0000305" key="12"/>
<evidence type="ECO:0007829" key="13">
    <source>
        <dbReference type="PDB" id="6IGK"/>
    </source>
</evidence>
<organism>
    <name type="scientific">Homo sapiens</name>
    <name type="common">Human</name>
    <dbReference type="NCBI Taxonomy" id="9606"/>
    <lineage>
        <taxon>Eukaryota</taxon>
        <taxon>Metazoa</taxon>
        <taxon>Chordata</taxon>
        <taxon>Craniata</taxon>
        <taxon>Vertebrata</taxon>
        <taxon>Euteleostomi</taxon>
        <taxon>Mammalia</taxon>
        <taxon>Eutheria</taxon>
        <taxon>Euarchontoglires</taxon>
        <taxon>Primates</taxon>
        <taxon>Haplorrhini</taxon>
        <taxon>Catarrhini</taxon>
        <taxon>Hominidae</taxon>
        <taxon>Homo</taxon>
    </lineage>
</organism>
<feature type="signal peptide" evidence="1">
    <location>
        <begin position="1"/>
        <end position="16"/>
    </location>
</feature>
<feature type="propeptide" id="PRO_0000008111">
    <location>
        <begin position="17"/>
        <end position="94"/>
    </location>
</feature>
<feature type="peptide" id="PRO_0000008112" description="Endothelin-3">
    <location>
        <begin position="97"/>
        <end position="117"/>
    </location>
</feature>
<feature type="propeptide" id="PRO_0000008113">
    <location>
        <begin position="118"/>
        <end position="238"/>
    </location>
</feature>
<feature type="region of interest" description="Disordered" evidence="2">
    <location>
        <begin position="24"/>
        <end position="89"/>
    </location>
</feature>
<feature type="region of interest" description="Endothelin-like">
    <location>
        <begin position="159"/>
        <end position="173"/>
    </location>
</feature>
<feature type="region of interest" description="Disordered" evidence="2">
    <location>
        <begin position="183"/>
        <end position="219"/>
    </location>
</feature>
<feature type="compositionally biased region" description="Basic and acidic residues" evidence="2">
    <location>
        <begin position="185"/>
        <end position="212"/>
    </location>
</feature>
<feature type="site" description="Cleavage; by KEL">
    <location>
        <begin position="117"/>
        <end position="118"/>
    </location>
</feature>
<feature type="disulfide bond">
    <location>
        <begin position="97"/>
        <end position="111"/>
    </location>
</feature>
<feature type="disulfide bond">
    <location>
        <begin position="99"/>
        <end position="107"/>
    </location>
</feature>
<feature type="splice variant" id="VSP_001445" description="In isoform Short." evidence="11">
    <original>SNSRTAEKTDKEEEGK</original>
    <variation>RQ</variation>
    <location>
        <begin position="181"/>
        <end position="196"/>
    </location>
</feature>
<feature type="splice variant" id="VSP_043139" description="In isoform 3." evidence="10">
    <original>EVKDQQSKQALDLHHPKLMPGSGLALAPSTCPRCLFQEGAP</original>
    <variation>RGANRGLCQRRLKSRTNKASRL</variation>
    <location>
        <begin position="198"/>
        <end position="238"/>
    </location>
</feature>
<feature type="sequence variant" id="VAR_009078" description="In dbSNP:rs11570255." evidence="5 8 9">
    <original>A</original>
    <variation>T</variation>
    <location>
        <position position="17"/>
    </location>
</feature>
<feature type="sequence variant" id="VAR_015238" description="In WS4B; dbSNP:rs752400458." evidence="4">
    <original>Y</original>
    <variation>C</variation>
    <location>
        <position position="127"/>
    </location>
</feature>
<feature type="sequence variant" id="VAR_002353" description="In WS4B; dbSNP:rs74315384." evidence="6">
    <original>C</original>
    <variation>F</variation>
    <location>
        <position position="159"/>
    </location>
</feature>
<feature type="sequence variant" id="VAR_009079" description="Probable risk factor for HSCR4; dbSNP:rs11570351." evidence="8">
    <original>A</original>
    <variation>T</variation>
    <location>
        <position position="224"/>
    </location>
</feature>
<feature type="helix" evidence="13">
    <location>
        <begin position="105"/>
        <end position="113"/>
    </location>
</feature>